<organism>
    <name type="scientific">Yarrowia lipolytica (strain CLIB 122 / E 150)</name>
    <name type="common">Yeast</name>
    <name type="synonym">Candida lipolytica</name>
    <dbReference type="NCBI Taxonomy" id="284591"/>
    <lineage>
        <taxon>Eukaryota</taxon>
        <taxon>Fungi</taxon>
        <taxon>Dikarya</taxon>
        <taxon>Ascomycota</taxon>
        <taxon>Saccharomycotina</taxon>
        <taxon>Dipodascomycetes</taxon>
        <taxon>Dipodascales</taxon>
        <taxon>Dipodascales incertae sedis</taxon>
        <taxon>Yarrowia</taxon>
    </lineage>
</organism>
<comment type="function">
    <text evidence="1">Component of the cleavage factor I (CF I) involved in pre-mRNA 3'-end processing.</text>
</comment>
<comment type="subcellular location">
    <subcellularLocation>
        <location evidence="1">Nucleus</location>
    </subcellularLocation>
</comment>
<comment type="similarity">
    <text evidence="3">Belongs to the CPSF4/YTH1 family.</text>
</comment>
<protein>
    <recommendedName>
        <fullName>mRNA 3'-end-processing protein YTH1</fullName>
    </recommendedName>
</protein>
<keyword id="KW-0479">Metal-binding</keyword>
<keyword id="KW-0507">mRNA processing</keyword>
<keyword id="KW-0539">Nucleus</keyword>
<keyword id="KW-1185">Reference proteome</keyword>
<keyword id="KW-0677">Repeat</keyword>
<keyword id="KW-0694">RNA-binding</keyword>
<keyword id="KW-0862">Zinc</keyword>
<keyword id="KW-0863">Zinc-finger</keyword>
<gene>
    <name type="primary">YTH1</name>
    <name type="ordered locus">YALI0D14982g</name>
</gene>
<feature type="chain" id="PRO_0000238544" description="mRNA 3'-end-processing protein YTH1">
    <location>
        <begin position="1"/>
        <end position="193"/>
    </location>
</feature>
<feature type="zinc finger region" description="C3H1-type 1" evidence="2">
    <location>
        <begin position="24"/>
        <end position="52"/>
    </location>
</feature>
<feature type="zinc finger region" description="C3H1-type 2" evidence="2">
    <location>
        <begin position="54"/>
        <end position="81"/>
    </location>
</feature>
<feature type="zinc finger region" description="C3H1-type 3" evidence="2">
    <location>
        <begin position="82"/>
        <end position="110"/>
    </location>
</feature>
<feature type="zinc finger region" description="C3H1-type 4" evidence="2">
    <location>
        <begin position="111"/>
        <end position="138"/>
    </location>
</feature>
<feature type="zinc finger region" description="C3H1-type 5" evidence="2">
    <location>
        <begin position="140"/>
        <end position="162"/>
    </location>
</feature>
<proteinExistence type="inferred from homology"/>
<accession>Q6C922</accession>
<reference key="1">
    <citation type="journal article" date="2004" name="Nature">
        <title>Genome evolution in yeasts.</title>
        <authorList>
            <person name="Dujon B."/>
            <person name="Sherman D."/>
            <person name="Fischer G."/>
            <person name="Durrens P."/>
            <person name="Casaregola S."/>
            <person name="Lafontaine I."/>
            <person name="de Montigny J."/>
            <person name="Marck C."/>
            <person name="Neuveglise C."/>
            <person name="Talla E."/>
            <person name="Goffard N."/>
            <person name="Frangeul L."/>
            <person name="Aigle M."/>
            <person name="Anthouard V."/>
            <person name="Babour A."/>
            <person name="Barbe V."/>
            <person name="Barnay S."/>
            <person name="Blanchin S."/>
            <person name="Beckerich J.-M."/>
            <person name="Beyne E."/>
            <person name="Bleykasten C."/>
            <person name="Boisrame A."/>
            <person name="Boyer J."/>
            <person name="Cattolico L."/>
            <person name="Confanioleri F."/>
            <person name="de Daruvar A."/>
            <person name="Despons L."/>
            <person name="Fabre E."/>
            <person name="Fairhead C."/>
            <person name="Ferry-Dumazet H."/>
            <person name="Groppi A."/>
            <person name="Hantraye F."/>
            <person name="Hennequin C."/>
            <person name="Jauniaux N."/>
            <person name="Joyet P."/>
            <person name="Kachouri R."/>
            <person name="Kerrest A."/>
            <person name="Koszul R."/>
            <person name="Lemaire M."/>
            <person name="Lesur I."/>
            <person name="Ma L."/>
            <person name="Muller H."/>
            <person name="Nicaud J.-M."/>
            <person name="Nikolski M."/>
            <person name="Oztas S."/>
            <person name="Ozier-Kalogeropoulos O."/>
            <person name="Pellenz S."/>
            <person name="Potier S."/>
            <person name="Richard G.-F."/>
            <person name="Straub M.-L."/>
            <person name="Suleau A."/>
            <person name="Swennen D."/>
            <person name="Tekaia F."/>
            <person name="Wesolowski-Louvel M."/>
            <person name="Westhof E."/>
            <person name="Wirth B."/>
            <person name="Zeniou-Meyer M."/>
            <person name="Zivanovic Y."/>
            <person name="Bolotin-Fukuhara M."/>
            <person name="Thierry A."/>
            <person name="Bouchier C."/>
            <person name="Caudron B."/>
            <person name="Scarpelli C."/>
            <person name="Gaillardin C."/>
            <person name="Weissenbach J."/>
            <person name="Wincker P."/>
            <person name="Souciet J.-L."/>
        </authorList>
    </citation>
    <scope>NUCLEOTIDE SEQUENCE [LARGE SCALE GENOMIC DNA]</scope>
    <source>
        <strain>CLIB 122 / E 150</strain>
    </source>
</reference>
<name>YTH1_YARLI</name>
<evidence type="ECO:0000250" key="1"/>
<evidence type="ECO:0000255" key="2">
    <source>
        <dbReference type="PROSITE-ProRule" id="PRU00723"/>
    </source>
</evidence>
<evidence type="ECO:0000305" key="3"/>
<sequence>MKFETPSRFKFTPYLEREYQFGLDPNRPLCRGFLQFDGCPRGNSCPDKHLAPTFLNKIVCKHWLRGLCKKGLNCEFLHEYNLQKMPECQFYVKNGFCTQSPDCQYLHIDPASKIPVCFNYEKGFCKMGPECSRKHIRRMPCELYMTGFCPKGRVCEFAHPKFVGIYDYMIIKPNPKDKAKDETKQETKEEALQ</sequence>
<dbReference type="EMBL" id="CR382130">
    <property type="protein sequence ID" value="CAG81028.1"/>
    <property type="molecule type" value="Genomic_DNA"/>
</dbReference>
<dbReference type="RefSeq" id="XP_502840.1">
    <property type="nucleotide sequence ID" value="XM_502840.1"/>
</dbReference>
<dbReference type="FunCoup" id="Q6C922">
    <property type="interactions" value="76"/>
</dbReference>
<dbReference type="STRING" id="284591.Q6C922"/>
<dbReference type="EnsemblFungi" id="CAG81028">
    <property type="protein sequence ID" value="CAG81028"/>
    <property type="gene ID" value="YALI0_D14982g"/>
</dbReference>
<dbReference type="KEGG" id="yli:2911334"/>
<dbReference type="VEuPathDB" id="FungiDB:YALI0_D14982g"/>
<dbReference type="HOGENOM" id="CLU_024513_1_2_1"/>
<dbReference type="InParanoid" id="Q6C922"/>
<dbReference type="OMA" id="SLVCKHY"/>
<dbReference type="OrthoDB" id="27357at4891"/>
<dbReference type="Proteomes" id="UP000001300">
    <property type="component" value="Chromosome D"/>
</dbReference>
<dbReference type="GO" id="GO:0005829">
    <property type="term" value="C:cytosol"/>
    <property type="evidence" value="ECO:0007669"/>
    <property type="project" value="EnsemblFungi"/>
</dbReference>
<dbReference type="GO" id="GO:0005847">
    <property type="term" value="C:mRNA cleavage and polyadenylation specificity factor complex"/>
    <property type="evidence" value="ECO:0007669"/>
    <property type="project" value="EnsemblFungi"/>
</dbReference>
<dbReference type="GO" id="GO:0003723">
    <property type="term" value="F:RNA binding"/>
    <property type="evidence" value="ECO:0007669"/>
    <property type="project" value="UniProtKB-KW"/>
</dbReference>
<dbReference type="GO" id="GO:0008270">
    <property type="term" value="F:zinc ion binding"/>
    <property type="evidence" value="ECO:0007669"/>
    <property type="project" value="UniProtKB-KW"/>
</dbReference>
<dbReference type="GO" id="GO:0006397">
    <property type="term" value="P:mRNA processing"/>
    <property type="evidence" value="ECO:0007669"/>
    <property type="project" value="UniProtKB-KW"/>
</dbReference>
<dbReference type="FunFam" id="4.10.1000.10:FF:000012">
    <property type="entry name" value="cleavage and polyadenylation specificity factor subunit 4"/>
    <property type="match status" value="1"/>
</dbReference>
<dbReference type="Gene3D" id="4.10.1000.10">
    <property type="entry name" value="Zinc finger, CCCH-type"/>
    <property type="match status" value="2"/>
</dbReference>
<dbReference type="InterPro" id="IPR045348">
    <property type="entry name" value="CPSF4/Yth1"/>
</dbReference>
<dbReference type="InterPro" id="IPR000571">
    <property type="entry name" value="Znf_CCCH"/>
</dbReference>
<dbReference type="InterPro" id="IPR036855">
    <property type="entry name" value="Znf_CCCH_sf"/>
</dbReference>
<dbReference type="PANTHER" id="PTHR23102:SF24">
    <property type="entry name" value="CLEAVAGE AND POLYADENYLATION SPECIFICITY FACTOR SUBUNIT 4"/>
    <property type="match status" value="1"/>
</dbReference>
<dbReference type="PANTHER" id="PTHR23102">
    <property type="entry name" value="CLEAVAGE AND POLYADENYLATION SPECIFICITY FACTOR SUBUNIT 4-RELATED"/>
    <property type="match status" value="1"/>
</dbReference>
<dbReference type="Pfam" id="PF00642">
    <property type="entry name" value="zf-CCCH"/>
    <property type="match status" value="2"/>
</dbReference>
<dbReference type="Pfam" id="PF14608">
    <property type="entry name" value="zf-CCCH_2"/>
    <property type="match status" value="2"/>
</dbReference>
<dbReference type="SMART" id="SM00356">
    <property type="entry name" value="ZnF_C3H1"/>
    <property type="match status" value="5"/>
</dbReference>
<dbReference type="SUPFAM" id="SSF90229">
    <property type="entry name" value="CCCH zinc finger"/>
    <property type="match status" value="2"/>
</dbReference>
<dbReference type="PROSITE" id="PS50103">
    <property type="entry name" value="ZF_C3H1"/>
    <property type="match status" value="5"/>
</dbReference>